<proteinExistence type="inferred from homology"/>
<sequence length="305" mass="33464">MVRIVIALGGNALLRNGEPRNYEVQYSHAIETFKIIRDITEKNETVITHGNGPQVGDIQQSHEISGIMANLHQSVAMSQGYIGEILANAYDEVRSKYSLSKSIFTIITRSVVNRNDPAFASPEKPIGRYYSDQEVDEAKRNGWVMKKFKDGWRRVVPSPEPIEILEEKAIEELVREGHIPLAVGGGGIPVVKENGRIVGIDAVIDKDIASSLLAAQLKADYFMILTDVESVYVNFGKPDQKPLGRIHLNEIEKYYAEGQFADGSMKPKVRAAINFVKNGGKAAFITNLENGSAALSGKAGTVIVP</sequence>
<reference key="1">
    <citation type="journal article" date="2000" name="Proc. Natl. Acad. Sci. U.S.A.">
        <title>Archaeal adaptation to higher temperatures revealed by genomic sequence of Thermoplasma volcanium.</title>
        <authorList>
            <person name="Kawashima T."/>
            <person name="Amano N."/>
            <person name="Koike H."/>
            <person name="Makino S."/>
            <person name="Higuchi S."/>
            <person name="Kawashima-Ohya Y."/>
            <person name="Watanabe K."/>
            <person name="Yamazaki M."/>
            <person name="Kanehori K."/>
            <person name="Kawamoto T."/>
            <person name="Nunoshiba T."/>
            <person name="Yamamoto Y."/>
            <person name="Aramaki H."/>
            <person name="Makino K."/>
            <person name="Suzuki M."/>
        </authorList>
    </citation>
    <scope>NUCLEOTIDE SEQUENCE [LARGE SCALE GENOMIC DNA]</scope>
    <source>
        <strain>ATCC 51530 / DSM 4299 / JCM 9571 / NBRC 15438 / GSS1</strain>
    </source>
</reference>
<dbReference type="EC" id="2.7.2.2"/>
<dbReference type="EMBL" id="BA000011">
    <property type="protein sequence ID" value="BAB59402.1"/>
    <property type="molecule type" value="Genomic_DNA"/>
</dbReference>
<dbReference type="RefSeq" id="WP_010916517.1">
    <property type="nucleotide sequence ID" value="NC_002689.2"/>
</dbReference>
<dbReference type="SMR" id="Q97C45"/>
<dbReference type="STRING" id="273116.gene:9381033"/>
<dbReference type="PaxDb" id="273116-14324474"/>
<dbReference type="GeneID" id="1440775"/>
<dbReference type="KEGG" id="tvo:TVG0273901"/>
<dbReference type="eggNOG" id="arCOG00863">
    <property type="taxonomic scope" value="Archaea"/>
</dbReference>
<dbReference type="HOGENOM" id="CLU_076278_0_0_2"/>
<dbReference type="OrthoDB" id="31128at2157"/>
<dbReference type="PhylomeDB" id="Q97C45"/>
<dbReference type="UniPathway" id="UPA00996">
    <property type="reaction ID" value="UER00366"/>
</dbReference>
<dbReference type="Proteomes" id="UP000001017">
    <property type="component" value="Chromosome"/>
</dbReference>
<dbReference type="GO" id="GO:0005829">
    <property type="term" value="C:cytosol"/>
    <property type="evidence" value="ECO:0007669"/>
    <property type="project" value="TreeGrafter"/>
</dbReference>
<dbReference type="GO" id="GO:0005524">
    <property type="term" value="F:ATP binding"/>
    <property type="evidence" value="ECO:0007669"/>
    <property type="project" value="UniProtKB-KW"/>
</dbReference>
<dbReference type="GO" id="GO:0008804">
    <property type="term" value="F:carbamate kinase activity"/>
    <property type="evidence" value="ECO:0007669"/>
    <property type="project" value="UniProtKB-EC"/>
</dbReference>
<dbReference type="GO" id="GO:0019546">
    <property type="term" value="P:arginine deiminase pathway"/>
    <property type="evidence" value="ECO:0007669"/>
    <property type="project" value="TreeGrafter"/>
</dbReference>
<dbReference type="CDD" id="cd04235">
    <property type="entry name" value="AAK_CK"/>
    <property type="match status" value="1"/>
</dbReference>
<dbReference type="FunFam" id="3.40.1160.10:FF:000007">
    <property type="entry name" value="Carbamate kinase"/>
    <property type="match status" value="1"/>
</dbReference>
<dbReference type="Gene3D" id="3.40.1160.10">
    <property type="entry name" value="Acetylglutamate kinase-like"/>
    <property type="match status" value="1"/>
</dbReference>
<dbReference type="InterPro" id="IPR036393">
    <property type="entry name" value="AceGlu_kinase-like_sf"/>
</dbReference>
<dbReference type="InterPro" id="IPR001048">
    <property type="entry name" value="Asp/Glu/Uridylate_kinase"/>
</dbReference>
<dbReference type="InterPro" id="IPR003964">
    <property type="entry name" value="Carb_kinase"/>
</dbReference>
<dbReference type="NCBIfam" id="NF009007">
    <property type="entry name" value="PRK12352.1"/>
    <property type="match status" value="1"/>
</dbReference>
<dbReference type="PANTHER" id="PTHR30409">
    <property type="entry name" value="CARBAMATE KINASE"/>
    <property type="match status" value="1"/>
</dbReference>
<dbReference type="PANTHER" id="PTHR30409:SF1">
    <property type="entry name" value="CARBAMATE KINASE-RELATED"/>
    <property type="match status" value="1"/>
</dbReference>
<dbReference type="Pfam" id="PF00696">
    <property type="entry name" value="AA_kinase"/>
    <property type="match status" value="1"/>
</dbReference>
<dbReference type="PIRSF" id="PIRSF000723">
    <property type="entry name" value="Carbamate_kin"/>
    <property type="match status" value="1"/>
</dbReference>
<dbReference type="PRINTS" id="PR01469">
    <property type="entry name" value="CARBMTKINASE"/>
</dbReference>
<dbReference type="SUPFAM" id="SSF53633">
    <property type="entry name" value="Carbamate kinase-like"/>
    <property type="match status" value="1"/>
</dbReference>
<feature type="chain" id="PRO_0000185144" description="Carbamate kinase">
    <location>
        <begin position="1"/>
        <end position="305"/>
    </location>
</feature>
<keyword id="KW-0056">Arginine metabolism</keyword>
<keyword id="KW-0067">ATP-binding</keyword>
<keyword id="KW-0963">Cytoplasm</keyword>
<keyword id="KW-0418">Kinase</keyword>
<keyword id="KW-0547">Nucleotide-binding</keyword>
<keyword id="KW-0808">Transferase</keyword>
<comment type="catalytic activity">
    <reaction>
        <text>hydrogencarbonate + NH4(+) + ATP = carbamoyl phosphate + ADP + H2O + H(+)</text>
        <dbReference type="Rhea" id="RHEA:10152"/>
        <dbReference type="ChEBI" id="CHEBI:15377"/>
        <dbReference type="ChEBI" id="CHEBI:15378"/>
        <dbReference type="ChEBI" id="CHEBI:17544"/>
        <dbReference type="ChEBI" id="CHEBI:28938"/>
        <dbReference type="ChEBI" id="CHEBI:30616"/>
        <dbReference type="ChEBI" id="CHEBI:58228"/>
        <dbReference type="ChEBI" id="CHEBI:456216"/>
        <dbReference type="EC" id="2.7.2.2"/>
    </reaction>
</comment>
<comment type="pathway">
    <text>Metabolic intermediate metabolism; carbamoyl phosphate degradation; CO(2) and NH(3) from carbamoyl phosphate: step 1/1.</text>
</comment>
<comment type="subcellular location">
    <subcellularLocation>
        <location evidence="1">Cytoplasm</location>
    </subcellularLocation>
</comment>
<comment type="similarity">
    <text evidence="1">Belongs to the carbamate kinase family.</text>
</comment>
<organism>
    <name type="scientific">Thermoplasma volcanium (strain ATCC 51530 / DSM 4299 / JCM 9571 / NBRC 15438 / GSS1)</name>
    <dbReference type="NCBI Taxonomy" id="273116"/>
    <lineage>
        <taxon>Archaea</taxon>
        <taxon>Methanobacteriati</taxon>
        <taxon>Thermoplasmatota</taxon>
        <taxon>Thermoplasmata</taxon>
        <taxon>Thermoplasmatales</taxon>
        <taxon>Thermoplasmataceae</taxon>
        <taxon>Thermoplasma</taxon>
    </lineage>
</organism>
<name>ARCC_THEVO</name>
<accession>Q97C45</accession>
<evidence type="ECO:0000305" key="1"/>
<gene>
    <name type="primary">arcC</name>
    <name type="ordered locus">TV0260</name>
    <name type="ORF">TVG0273901</name>
</gene>
<protein>
    <recommendedName>
        <fullName>Carbamate kinase</fullName>
        <ecNumber>2.7.2.2</ecNumber>
    </recommendedName>
</protein>